<accession>Q55G20</accession>
<organism>
    <name type="scientific">Dictyostelium discoideum</name>
    <name type="common">Social amoeba</name>
    <dbReference type="NCBI Taxonomy" id="44689"/>
    <lineage>
        <taxon>Eukaryota</taxon>
        <taxon>Amoebozoa</taxon>
        <taxon>Evosea</taxon>
        <taxon>Eumycetozoa</taxon>
        <taxon>Dictyostelia</taxon>
        <taxon>Dictyosteliales</taxon>
        <taxon>Dictyosteliaceae</taxon>
        <taxon>Dictyostelium</taxon>
    </lineage>
</organism>
<reference key="1">
    <citation type="journal article" date="2005" name="Nature">
        <title>The genome of the social amoeba Dictyostelium discoideum.</title>
        <authorList>
            <person name="Eichinger L."/>
            <person name="Pachebat J.A."/>
            <person name="Gloeckner G."/>
            <person name="Rajandream M.A."/>
            <person name="Sucgang R."/>
            <person name="Berriman M."/>
            <person name="Song J."/>
            <person name="Olsen R."/>
            <person name="Szafranski K."/>
            <person name="Xu Q."/>
            <person name="Tunggal B."/>
            <person name="Kummerfeld S."/>
            <person name="Madera M."/>
            <person name="Konfortov B.A."/>
            <person name="Rivero F."/>
            <person name="Bankier A.T."/>
            <person name="Lehmann R."/>
            <person name="Hamlin N."/>
            <person name="Davies R."/>
            <person name="Gaudet P."/>
            <person name="Fey P."/>
            <person name="Pilcher K."/>
            <person name="Chen G."/>
            <person name="Saunders D."/>
            <person name="Sodergren E.J."/>
            <person name="Davis P."/>
            <person name="Kerhornou A."/>
            <person name="Nie X."/>
            <person name="Hall N."/>
            <person name="Anjard C."/>
            <person name="Hemphill L."/>
            <person name="Bason N."/>
            <person name="Farbrother P."/>
            <person name="Desany B."/>
            <person name="Just E."/>
            <person name="Morio T."/>
            <person name="Rost R."/>
            <person name="Churcher C.M."/>
            <person name="Cooper J."/>
            <person name="Haydock S."/>
            <person name="van Driessche N."/>
            <person name="Cronin A."/>
            <person name="Goodhead I."/>
            <person name="Muzny D.M."/>
            <person name="Mourier T."/>
            <person name="Pain A."/>
            <person name="Lu M."/>
            <person name="Harper D."/>
            <person name="Lindsay R."/>
            <person name="Hauser H."/>
            <person name="James K.D."/>
            <person name="Quiles M."/>
            <person name="Madan Babu M."/>
            <person name="Saito T."/>
            <person name="Buchrieser C."/>
            <person name="Wardroper A."/>
            <person name="Felder M."/>
            <person name="Thangavelu M."/>
            <person name="Johnson D."/>
            <person name="Knights A."/>
            <person name="Loulseged H."/>
            <person name="Mungall K.L."/>
            <person name="Oliver K."/>
            <person name="Price C."/>
            <person name="Quail M.A."/>
            <person name="Urushihara H."/>
            <person name="Hernandez J."/>
            <person name="Rabbinowitsch E."/>
            <person name="Steffen D."/>
            <person name="Sanders M."/>
            <person name="Ma J."/>
            <person name="Kohara Y."/>
            <person name="Sharp S."/>
            <person name="Simmonds M.N."/>
            <person name="Spiegler S."/>
            <person name="Tivey A."/>
            <person name="Sugano S."/>
            <person name="White B."/>
            <person name="Walker D."/>
            <person name="Woodward J.R."/>
            <person name="Winckler T."/>
            <person name="Tanaka Y."/>
            <person name="Shaulsky G."/>
            <person name="Schleicher M."/>
            <person name="Weinstock G.M."/>
            <person name="Rosenthal A."/>
            <person name="Cox E.C."/>
            <person name="Chisholm R.L."/>
            <person name="Gibbs R.A."/>
            <person name="Loomis W.F."/>
            <person name="Platzer M."/>
            <person name="Kay R.R."/>
            <person name="Williams J.G."/>
            <person name="Dear P.H."/>
            <person name="Noegel A.A."/>
            <person name="Barrell B.G."/>
            <person name="Kuspa A."/>
        </authorList>
    </citation>
    <scope>NUCLEOTIDE SEQUENCE [LARGE SCALE GENOMIC DNA]</scope>
    <source>
        <strain>AX4</strain>
    </source>
</reference>
<protein>
    <recommendedName>
        <fullName>Putative uncharacterized protein DDB_G0268364</fullName>
    </recommendedName>
</protein>
<dbReference type="EMBL" id="AAFI02000003">
    <property type="protein sequence ID" value="EAL73635.1"/>
    <property type="molecule type" value="Genomic_DNA"/>
</dbReference>
<dbReference type="RefSeq" id="XP_647363.1">
    <property type="nucleotide sequence ID" value="XM_642271.1"/>
</dbReference>
<dbReference type="STRING" id="44689.Q55G20"/>
<dbReference type="GlyGen" id="Q55G20">
    <property type="glycosylation" value="1 site"/>
</dbReference>
<dbReference type="PaxDb" id="44689-DDB0202163"/>
<dbReference type="EnsemblProtists" id="EAL73635">
    <property type="protein sequence ID" value="EAL73635"/>
    <property type="gene ID" value="DDB_G0268364"/>
</dbReference>
<dbReference type="GeneID" id="8616174"/>
<dbReference type="KEGG" id="ddi:DDB_G0268364"/>
<dbReference type="dictyBase" id="DDB_G0268364"/>
<dbReference type="VEuPathDB" id="AmoebaDB:DDB_G0268364"/>
<dbReference type="HOGENOM" id="CLU_388033_0_0_1"/>
<dbReference type="InParanoid" id="Q55G20"/>
<dbReference type="OMA" id="YNETISR"/>
<dbReference type="PRO" id="PR:Q55G20"/>
<dbReference type="Proteomes" id="UP000002195">
    <property type="component" value="Chromosome 1"/>
</dbReference>
<keyword id="KW-1185">Reference proteome</keyword>
<gene>
    <name type="ORF">DDB_G0268364</name>
</gene>
<evidence type="ECO:0000256" key="1">
    <source>
        <dbReference type="SAM" id="MobiDB-lite"/>
    </source>
</evidence>
<feature type="chain" id="PRO_0000348091" description="Putative uncharacterized protein DDB_G0268364">
    <location>
        <begin position="1"/>
        <end position="712"/>
    </location>
</feature>
<feature type="region of interest" description="Disordered" evidence="1">
    <location>
        <begin position="1"/>
        <end position="46"/>
    </location>
</feature>
<feature type="region of interest" description="Disordered" evidence="1">
    <location>
        <begin position="107"/>
        <end position="264"/>
    </location>
</feature>
<feature type="region of interest" description="Disordered" evidence="1">
    <location>
        <begin position="370"/>
        <end position="389"/>
    </location>
</feature>
<feature type="compositionally biased region" description="Low complexity" evidence="1">
    <location>
        <begin position="10"/>
        <end position="46"/>
    </location>
</feature>
<feature type="compositionally biased region" description="Low complexity" evidence="1">
    <location>
        <begin position="107"/>
        <end position="143"/>
    </location>
</feature>
<feature type="compositionally biased region" description="Low complexity" evidence="1">
    <location>
        <begin position="161"/>
        <end position="173"/>
    </location>
</feature>
<feature type="compositionally biased region" description="Polar residues" evidence="1">
    <location>
        <begin position="178"/>
        <end position="187"/>
    </location>
</feature>
<feature type="compositionally biased region" description="Low complexity" evidence="1">
    <location>
        <begin position="188"/>
        <end position="198"/>
    </location>
</feature>
<feature type="compositionally biased region" description="Low complexity" evidence="1">
    <location>
        <begin position="241"/>
        <end position="264"/>
    </location>
</feature>
<proteinExistence type="predicted"/>
<name>Y0216_DICDI</name>
<sequence>MAKIVTRGDINNSLNLNNSNSNSNSNSSININNNNNSNNSNNNNLNNKNLKKCPICNKSLTNNDPNNLNGSILHSIECFVEISIALKLEFKKSISIAELNHIGKVNNIKPSQQNSPQNNSNSNNINININNNSNNGNSTSNSSDETVEGFKKRKRKDEFNTFDNQQTSNNSSNDNDDISPTTSPQLEQHQQYQQQQHQQQHHHHHHQQQQSSPIITRQQQKQLLLSPPPPLLQIETPSSPPLQQQQQPQPQQQPQPQQQQIPQAQQLRFIDSQRLKQQQQLQLEQQLFQQQQQQEQHQQQQLQQLHQQNQIEIQRYHQRQLQQQQQIQIEQQRQLLVQQQNQHQQKQIEYQKLQQQHLLLHQQQQQQQQQPQHQQNQQNQQNQQNQQNQQLLQHQQQQNQLAIIQKRLLQQQQQQQQQQQQQQQLIQQQQQQQQANHSKLLHLYQQLPQPFIHIFNSLTTEQKQVLHTRVLSHPPSDPMSPLQFVQTQLVQFNRQMDLRKSQQSQSVNTITQPQQQQQQQQQQQQQQQQQQQQQQQQQQQQQQQQQQQQQQQQQQQQYQQQVPQQQQQQQYQQQIQQQQEELVESELAISYRAAIFPYLFGTRCLGNRCPDSFKKYHIYIKNELIFSICPIQHDNNSFSNAKRVLYSALEYAGVIDNVIKSSSVVCNGCDERVGDLIRYEKRESSSGGREIQFYCSIDCFLNTNFYKKKQTK</sequence>